<keyword id="KW-0007">Acetylation</keyword>
<keyword id="KW-0031">Aminopeptidase</keyword>
<keyword id="KW-0903">Direct protein sequencing</keyword>
<keyword id="KW-0378">Hydrolase</keyword>
<keyword id="KW-0479">Metal-binding</keyword>
<keyword id="KW-0482">Metalloprotease</keyword>
<keyword id="KW-0597">Phosphoprotein</keyword>
<keyword id="KW-0645">Protease</keyword>
<keyword id="KW-1185">Reference proteome</keyword>
<keyword id="KW-0964">Secreted</keyword>
<keyword id="KW-0862">Zinc</keyword>
<feature type="chain" id="PRO_0000095090" description="Aminopeptidase B">
    <location>
        <begin position="1"/>
        <end position="650"/>
    </location>
</feature>
<feature type="active site" description="Proton acceptor" evidence="3">
    <location>
        <position position="326"/>
    </location>
</feature>
<feature type="binding site" evidence="1">
    <location>
        <begin position="298"/>
        <end position="302"/>
    </location>
    <ligand>
        <name>substrate</name>
    </ligand>
</feature>
<feature type="binding site">
    <location>
        <position position="325"/>
    </location>
    <ligand>
        <name>Zn(2+)</name>
        <dbReference type="ChEBI" id="CHEBI:29105"/>
        <note>catalytic</note>
    </ligand>
</feature>
<feature type="binding site">
    <location>
        <position position="329"/>
    </location>
    <ligand>
        <name>Zn(2+)</name>
        <dbReference type="ChEBI" id="CHEBI:29105"/>
        <note>catalytic</note>
    </ligand>
</feature>
<feature type="binding site">
    <location>
        <position position="348"/>
    </location>
    <ligand>
        <name>Zn(2+)</name>
        <dbReference type="ChEBI" id="CHEBI:29105"/>
        <note>catalytic</note>
    </ligand>
</feature>
<feature type="site" description="Transition state stabilizer" evidence="1">
    <location>
        <position position="414"/>
    </location>
</feature>
<feature type="modified residue" description="Phosphoserine" evidence="2">
    <location>
        <position position="7"/>
    </location>
</feature>
<feature type="modified residue" description="N6-acetyllysine" evidence="2">
    <location>
        <position position="446"/>
    </location>
</feature>
<feature type="sequence conflict" description="In Ref. 1; AAB52971." evidence="4" ref="1">
    <original>FG</original>
    <variation>L</variation>
    <location>
        <begin position="47"/>
        <end position="48"/>
    </location>
</feature>
<feature type="sequence conflict" description="In Ref. 2; BAA13413." evidence="4" ref="2">
    <location>
        <position position="74"/>
    </location>
</feature>
<feature type="sequence conflict" description="In Ref. 1; AAB52971." evidence="4" ref="1">
    <original>WA</original>
    <variation>T</variation>
    <location>
        <begin position="250"/>
        <end position="251"/>
    </location>
</feature>
<feature type="sequence conflict" description="In Ref. 2; BAA13413." evidence="4" ref="2">
    <original>S</original>
    <variation>A</variation>
    <location>
        <position position="627"/>
    </location>
</feature>
<organism>
    <name type="scientific">Rattus norvegicus</name>
    <name type="common">Rat</name>
    <dbReference type="NCBI Taxonomy" id="10116"/>
    <lineage>
        <taxon>Eukaryota</taxon>
        <taxon>Metazoa</taxon>
        <taxon>Chordata</taxon>
        <taxon>Craniata</taxon>
        <taxon>Vertebrata</taxon>
        <taxon>Euteleostomi</taxon>
        <taxon>Mammalia</taxon>
        <taxon>Eutheria</taxon>
        <taxon>Euarchontoglires</taxon>
        <taxon>Glires</taxon>
        <taxon>Rodentia</taxon>
        <taxon>Myomorpha</taxon>
        <taxon>Muroidea</taxon>
        <taxon>Muridae</taxon>
        <taxon>Murinae</taxon>
        <taxon>Rattus</taxon>
    </lineage>
</organism>
<sequence>MESSGPSSCHSAARRPLHSAQAVDVASASSFRAFEILHLHLDLRAEFGPPGPGPGSRGLNGKATLELRCLLPEGASELRLDSHSCLEVMAATLLRGQPGDQQQLTEPVPFHTQPFSHYGQALCVVFPKPCCAAERFRLELTYRVGEGPGVCWLAPEQTAGKKKPFVYTQGQAVLNRAFFPCFDTPAVKCTYSALVEVPDGFTAVMSASTWERRGPNKFFFQMSQPIPSYLIALAIGDLASAEVGPRSRVWAEPCLIEAAKEEYNGVIEEFLATGEKLFGPYVWGRYDLLFMPPSFPFGGMENPCLTFVTPCLLAGDRSLADVIIHEISHSWFGNLVTNANWGEFWLNEGFTMYAQRRISTILFGAAYTCLEAATGRALLRQHMDVSGEENPLNKLRVKIEPGVDPDDTYNETPYEKGYCFVSYLAHLVGDQEQFDKFLKAYVDEFKFQSILAEDFLEFYLEYFPELKKKGVDSIPGFEFNRWLNTPGWPPYLPDLSPGDSLMKPAEELAELWAASEPDMQAIEAVAISTWKTYQLVYFLDKILQKSPLPPGNVKKLGETYPKISNAQNAELRLRWGQIILKNDHQEEFWKVKDFLQSQGKQKYTLPLYHAMMGGSEMARTLAKETFSATASQLHSNVVNYVQQILAPKGS</sequence>
<reference key="1">
    <citation type="journal article" date="1997" name="Proc. Natl. Acad. Sci. U.S.A.">
        <title>Aminopeptidase B from the rat testis is a bifunctional enzyme structurally related to leukotriene-A4 hydrolase.</title>
        <authorList>
            <person name="Cadel S."/>
            <person name="Foulon T."/>
            <person name="Viron A."/>
            <person name="Balogh A."/>
            <person name="Midol-Monnet S."/>
            <person name="Noel N."/>
            <person name="Cohen P."/>
        </authorList>
    </citation>
    <scope>NUCLEOTIDE SEQUENCE [MRNA]</scope>
    <scope>PARTIAL PROTEIN SEQUENCE</scope>
    <source>
        <strain>Sprague-Dawley</strain>
        <tissue>Testis</tissue>
    </source>
</reference>
<reference key="2">
    <citation type="journal article" date="1996" name="J. Biol. Chem.">
        <title>Molecular cloning and expression of rat liver aminopeptidase B.</title>
        <authorList>
            <person name="Fukasawa K.M."/>
            <person name="Fukasawa K."/>
            <person name="Kanai M."/>
            <person name="Fujii S."/>
            <person name="Harada M."/>
        </authorList>
    </citation>
    <scope>NUCLEOTIDE SEQUENCE [MRNA]</scope>
    <source>
        <strain>Wistar</strain>
        <tissue>Liver</tissue>
    </source>
</reference>
<reference key="3">
    <citation type="journal article" date="1999" name="Int. J. Biochem. Cell Biol.">
        <title>Aminopeptidase B (EC 3.4.11.6).</title>
        <authorList>
            <person name="Foulon T."/>
            <person name="Cadel S."/>
            <person name="Cohen P."/>
        </authorList>
    </citation>
    <scope>REVIEW</scope>
</reference>
<dbReference type="EC" id="3.4.11.6"/>
<dbReference type="EMBL" id="U61696">
    <property type="protein sequence ID" value="AAB52971.1"/>
    <property type="molecule type" value="mRNA"/>
</dbReference>
<dbReference type="EMBL" id="D87515">
    <property type="protein sequence ID" value="BAA13413.1"/>
    <property type="molecule type" value="mRNA"/>
</dbReference>
<dbReference type="RefSeq" id="NP_112359.1">
    <property type="nucleotide sequence ID" value="NM_031097.1"/>
</dbReference>
<dbReference type="SMR" id="O09175"/>
<dbReference type="BioGRID" id="249633">
    <property type="interactions" value="1"/>
</dbReference>
<dbReference type="FunCoup" id="O09175">
    <property type="interactions" value="1088"/>
</dbReference>
<dbReference type="IntAct" id="O09175">
    <property type="interactions" value="5"/>
</dbReference>
<dbReference type="MINT" id="O09175"/>
<dbReference type="STRING" id="10116.ENSRNOP00000009198"/>
<dbReference type="BindingDB" id="O09175"/>
<dbReference type="ChEMBL" id="CHEMBL2452"/>
<dbReference type="DrugCentral" id="O09175"/>
<dbReference type="MEROPS" id="M01.014"/>
<dbReference type="iPTMnet" id="O09175"/>
<dbReference type="PhosphoSitePlus" id="O09175"/>
<dbReference type="SwissPalm" id="O09175"/>
<dbReference type="jPOST" id="O09175"/>
<dbReference type="PaxDb" id="10116-ENSRNOP00000009198"/>
<dbReference type="GeneID" id="81761"/>
<dbReference type="KEGG" id="rno:81761"/>
<dbReference type="UCSC" id="RGD:621137">
    <property type="organism name" value="rat"/>
</dbReference>
<dbReference type="AGR" id="RGD:621137"/>
<dbReference type="CTD" id="6051"/>
<dbReference type="RGD" id="621137">
    <property type="gene designation" value="Rnpep"/>
</dbReference>
<dbReference type="eggNOG" id="KOG1047">
    <property type="taxonomic scope" value="Eukaryota"/>
</dbReference>
<dbReference type="InParanoid" id="O09175"/>
<dbReference type="PhylomeDB" id="O09175"/>
<dbReference type="BRENDA" id="3.4.11.6">
    <property type="organism ID" value="5301"/>
</dbReference>
<dbReference type="PRO" id="PR:O09175"/>
<dbReference type="Proteomes" id="UP000002494">
    <property type="component" value="Unplaced"/>
</dbReference>
<dbReference type="GO" id="GO:0009897">
    <property type="term" value="C:external side of plasma membrane"/>
    <property type="evidence" value="ECO:0000314"/>
    <property type="project" value="RGD"/>
</dbReference>
<dbReference type="GO" id="GO:0005576">
    <property type="term" value="C:extracellular region"/>
    <property type="evidence" value="ECO:0000314"/>
    <property type="project" value="UniProtKB"/>
</dbReference>
<dbReference type="GO" id="GO:0005615">
    <property type="term" value="C:extracellular space"/>
    <property type="evidence" value="ECO:0000314"/>
    <property type="project" value="RGD"/>
</dbReference>
<dbReference type="GO" id="GO:0005794">
    <property type="term" value="C:Golgi apparatus"/>
    <property type="evidence" value="ECO:0000303"/>
    <property type="project" value="UniProtKB"/>
</dbReference>
<dbReference type="GO" id="GO:0005886">
    <property type="term" value="C:plasma membrane"/>
    <property type="evidence" value="ECO:0000314"/>
    <property type="project" value="UniProtKB"/>
</dbReference>
<dbReference type="GO" id="GO:0030141">
    <property type="term" value="C:secretory granule"/>
    <property type="evidence" value="ECO:0000314"/>
    <property type="project" value="RGD"/>
</dbReference>
<dbReference type="GO" id="GO:0004177">
    <property type="term" value="F:aminopeptidase activity"/>
    <property type="evidence" value="ECO:0000314"/>
    <property type="project" value="UniProtKB"/>
</dbReference>
<dbReference type="GO" id="GO:0050897">
    <property type="term" value="F:cobalt ion binding"/>
    <property type="evidence" value="ECO:0000314"/>
    <property type="project" value="RGD"/>
</dbReference>
<dbReference type="GO" id="GO:0005507">
    <property type="term" value="F:copper ion binding"/>
    <property type="evidence" value="ECO:0000314"/>
    <property type="project" value="RGD"/>
</dbReference>
<dbReference type="GO" id="GO:0070006">
    <property type="term" value="F:metalloaminopeptidase activity"/>
    <property type="evidence" value="ECO:0000314"/>
    <property type="project" value="RGD"/>
</dbReference>
<dbReference type="GO" id="GO:0042277">
    <property type="term" value="F:peptide binding"/>
    <property type="evidence" value="ECO:0000314"/>
    <property type="project" value="RGD"/>
</dbReference>
<dbReference type="GO" id="GO:0008270">
    <property type="term" value="F:zinc ion binding"/>
    <property type="evidence" value="ECO:0000314"/>
    <property type="project" value="RGD"/>
</dbReference>
<dbReference type="GO" id="GO:0045776">
    <property type="term" value="P:negative regulation of blood pressure"/>
    <property type="evidence" value="ECO:0000315"/>
    <property type="project" value="RGD"/>
</dbReference>
<dbReference type="GO" id="GO:0016485">
    <property type="term" value="P:protein processing"/>
    <property type="evidence" value="ECO:0000314"/>
    <property type="project" value="RGD"/>
</dbReference>
<dbReference type="GO" id="GO:0006508">
    <property type="term" value="P:proteolysis"/>
    <property type="evidence" value="ECO:0000318"/>
    <property type="project" value="GO_Central"/>
</dbReference>
<dbReference type="GO" id="GO:0060041">
    <property type="term" value="P:retina development in camera-type eye"/>
    <property type="evidence" value="ECO:0000270"/>
    <property type="project" value="RGD"/>
</dbReference>
<dbReference type="CDD" id="cd09599">
    <property type="entry name" value="M1_LTA4H"/>
    <property type="match status" value="1"/>
</dbReference>
<dbReference type="FunFam" id="2.60.40.1730:FF:000011">
    <property type="entry name" value="Arginyl aminopeptidase"/>
    <property type="match status" value="1"/>
</dbReference>
<dbReference type="FunFam" id="1.10.390.10:FF:000003">
    <property type="entry name" value="Leukotriene A(4) hydrolase"/>
    <property type="match status" value="1"/>
</dbReference>
<dbReference type="FunFam" id="1.25.40.320:FF:000001">
    <property type="entry name" value="Leukotriene A(4) hydrolase"/>
    <property type="match status" value="1"/>
</dbReference>
<dbReference type="FunFam" id="3.30.2010.30:FF:000001">
    <property type="entry name" value="Leukotriene A(4) hydrolase"/>
    <property type="match status" value="1"/>
</dbReference>
<dbReference type="Gene3D" id="3.30.2010.30">
    <property type="match status" value="1"/>
</dbReference>
<dbReference type="Gene3D" id="1.10.390.10">
    <property type="entry name" value="Neutral Protease Domain 2"/>
    <property type="match status" value="1"/>
</dbReference>
<dbReference type="Gene3D" id="1.25.40.320">
    <property type="entry name" value="Peptidase M1, leukotriene A4 hydrolase/aminopeptidase C-terminal domain"/>
    <property type="match status" value="1"/>
</dbReference>
<dbReference type="Gene3D" id="2.60.40.1730">
    <property type="entry name" value="tricorn interacting facor f3 domain"/>
    <property type="match status" value="1"/>
</dbReference>
<dbReference type="InterPro" id="IPR045357">
    <property type="entry name" value="Aminopeptidase_N-like_N"/>
</dbReference>
<dbReference type="InterPro" id="IPR042097">
    <property type="entry name" value="Aminopeptidase_N-like_N_sf"/>
</dbReference>
<dbReference type="InterPro" id="IPR016024">
    <property type="entry name" value="ARM-type_fold"/>
</dbReference>
<dbReference type="InterPro" id="IPR049980">
    <property type="entry name" value="LTA4H_cat"/>
</dbReference>
<dbReference type="InterPro" id="IPR038502">
    <property type="entry name" value="M1_LTA-4_hydro/amino_C_sf"/>
</dbReference>
<dbReference type="InterPro" id="IPR034015">
    <property type="entry name" value="M1_LTA4H"/>
</dbReference>
<dbReference type="InterPro" id="IPR001930">
    <property type="entry name" value="Peptidase_M1"/>
</dbReference>
<dbReference type="InterPro" id="IPR015211">
    <property type="entry name" value="Peptidase_M1_C"/>
</dbReference>
<dbReference type="InterPro" id="IPR014782">
    <property type="entry name" value="Peptidase_M1_dom"/>
</dbReference>
<dbReference type="InterPro" id="IPR027268">
    <property type="entry name" value="Peptidase_M4/M1_CTD_sf"/>
</dbReference>
<dbReference type="PANTHER" id="PTHR45726:SF1">
    <property type="entry name" value="AMINOPEPTIDASE B"/>
    <property type="match status" value="1"/>
</dbReference>
<dbReference type="PANTHER" id="PTHR45726">
    <property type="entry name" value="LEUKOTRIENE A-4 HYDROLASE"/>
    <property type="match status" value="1"/>
</dbReference>
<dbReference type="Pfam" id="PF09127">
    <property type="entry name" value="Leuk-A4-hydro_C"/>
    <property type="match status" value="1"/>
</dbReference>
<dbReference type="Pfam" id="PF01433">
    <property type="entry name" value="Peptidase_M1"/>
    <property type="match status" value="1"/>
</dbReference>
<dbReference type="Pfam" id="PF17900">
    <property type="entry name" value="Peptidase_M1_N"/>
    <property type="match status" value="1"/>
</dbReference>
<dbReference type="PRINTS" id="PR00756">
    <property type="entry name" value="ALADIPTASE"/>
</dbReference>
<dbReference type="SMART" id="SM01263">
    <property type="entry name" value="Leuk-A4-hydro_C"/>
    <property type="match status" value="1"/>
</dbReference>
<dbReference type="SUPFAM" id="SSF48371">
    <property type="entry name" value="ARM repeat"/>
    <property type="match status" value="1"/>
</dbReference>
<dbReference type="SUPFAM" id="SSF63737">
    <property type="entry name" value="Leukotriene A4 hydrolase N-terminal domain"/>
    <property type="match status" value="1"/>
</dbReference>
<dbReference type="SUPFAM" id="SSF55486">
    <property type="entry name" value="Metalloproteases ('zincins'), catalytic domain"/>
    <property type="match status" value="1"/>
</dbReference>
<dbReference type="PROSITE" id="PS00142">
    <property type="entry name" value="ZINC_PROTEASE"/>
    <property type="match status" value="1"/>
</dbReference>
<accession>O09175</accession>
<accession>P97530</accession>
<evidence type="ECO:0000250" key="1"/>
<evidence type="ECO:0000250" key="2">
    <source>
        <dbReference type="UniProtKB" id="Q9H4A4"/>
    </source>
</evidence>
<evidence type="ECO:0000255" key="3">
    <source>
        <dbReference type="PROSITE-ProRule" id="PRU10095"/>
    </source>
</evidence>
<evidence type="ECO:0000305" key="4"/>
<comment type="function">
    <text>Exopeptidase which selectively removes arginine and/or lysine residues from the N-terminus of several peptide substrates including Arg(0)-Leu-enkephalin, Arg(0)-Met-enkephalin and Arg(-1)-Lys(0)-somatostatin-14. Can hydrolyze leukotriene A4 (LTA-4) into leukotriene B4 (LTB-4).</text>
</comment>
<comment type="catalytic activity">
    <reaction>
        <text>Release of N-terminal Arg and Lys from oligopeptides when P1' is not Pro. Also acts on arylamides of Arg and Lys.</text>
        <dbReference type="EC" id="3.4.11.6"/>
    </reaction>
</comment>
<comment type="cofactor">
    <cofactor evidence="1">
        <name>Zn(2+)</name>
        <dbReference type="ChEBI" id="CHEBI:29105"/>
    </cofactor>
    <text evidence="1">Binds 1 zinc ion per subunit.</text>
</comment>
<comment type="subunit">
    <text>Monomer.</text>
</comment>
<comment type="subcellular location">
    <subcellularLocation>
        <location>Secreted</location>
    </subcellularLocation>
</comment>
<comment type="tissue specificity">
    <text>Widely expressed.</text>
</comment>
<comment type="similarity">
    <text evidence="4">Belongs to the peptidase M1 family.</text>
</comment>
<proteinExistence type="evidence at protein level"/>
<protein>
    <recommendedName>
        <fullName>Aminopeptidase B</fullName>
        <shortName>AP-B</shortName>
        <ecNumber>3.4.11.6</ecNumber>
    </recommendedName>
    <alternativeName>
        <fullName>Arginine aminopeptidase</fullName>
    </alternativeName>
    <alternativeName>
        <fullName>Arginyl aminopeptidase</fullName>
    </alternativeName>
    <alternativeName>
        <fullName>Cytosol aminopeptidase IV</fullName>
    </alternativeName>
</protein>
<gene>
    <name type="primary">Rnpep</name>
</gene>
<name>AMPB_RAT</name>